<feature type="chain" id="PRO_1000190751" description="Probable RNA 2'-phosphotransferase">
    <location>
        <begin position="1"/>
        <end position="185"/>
    </location>
</feature>
<proteinExistence type="inferred from homology"/>
<reference key="1">
    <citation type="journal article" date="2009" name="J. Bacteriol.">
        <title>Genome sequences of three Agrobacterium biovars help elucidate the evolution of multichromosome genomes in bacteria.</title>
        <authorList>
            <person name="Slater S.C."/>
            <person name="Goldman B.S."/>
            <person name="Goodner B."/>
            <person name="Setubal J.C."/>
            <person name="Farrand S.K."/>
            <person name="Nester E.W."/>
            <person name="Burr T.J."/>
            <person name="Banta L."/>
            <person name="Dickerman A.W."/>
            <person name="Paulsen I."/>
            <person name="Otten L."/>
            <person name="Suen G."/>
            <person name="Welch R."/>
            <person name="Almeida N.F."/>
            <person name="Arnold F."/>
            <person name="Burton O.T."/>
            <person name="Du Z."/>
            <person name="Ewing A."/>
            <person name="Godsy E."/>
            <person name="Heisel S."/>
            <person name="Houmiel K.L."/>
            <person name="Jhaveri J."/>
            <person name="Lu J."/>
            <person name="Miller N.M."/>
            <person name="Norton S."/>
            <person name="Chen Q."/>
            <person name="Phoolcharoen W."/>
            <person name="Ohlin V."/>
            <person name="Ondrusek D."/>
            <person name="Pride N."/>
            <person name="Stricklin S.L."/>
            <person name="Sun J."/>
            <person name="Wheeler C."/>
            <person name="Wilson L."/>
            <person name="Zhu H."/>
            <person name="Wood D.W."/>
        </authorList>
    </citation>
    <scope>NUCLEOTIDE SEQUENCE [LARGE SCALE GENOMIC DNA]</scope>
    <source>
        <strain>K84 / ATCC BAA-868</strain>
    </source>
</reference>
<keyword id="KW-0520">NAD</keyword>
<keyword id="KW-0808">Transferase</keyword>
<name>KPTA_RHIR8</name>
<evidence type="ECO:0000255" key="1">
    <source>
        <dbReference type="HAMAP-Rule" id="MF_00299"/>
    </source>
</evidence>
<protein>
    <recommendedName>
        <fullName evidence="1">Probable RNA 2'-phosphotransferase</fullName>
        <ecNumber evidence="1">2.7.1.-</ecNumber>
    </recommendedName>
</protein>
<gene>
    <name evidence="1" type="primary">kptA</name>
    <name type="ordered locus">Arad_2576</name>
</gene>
<accession>B9JFP7</accession>
<sequence>MASASLQTEISKFMSYVLRHAPHEVGLTLDPEGWVPFEDLKKAVFTRFDVTDADVLEVIETNPKKRFTLMGDRIRAAQGHSVDVDLALAPATPPSQLFHGTTMESWTAIQNAGLKKMQRHHVHLSADTETAKIVAARRKGVHIILEVEAARMHSEGHSFFVTDNEVWLTDHVPSQYLSPISGAES</sequence>
<organism>
    <name type="scientific">Rhizobium rhizogenes (strain K84 / ATCC BAA-868)</name>
    <name type="common">Agrobacterium radiobacter</name>
    <dbReference type="NCBI Taxonomy" id="311403"/>
    <lineage>
        <taxon>Bacteria</taxon>
        <taxon>Pseudomonadati</taxon>
        <taxon>Pseudomonadota</taxon>
        <taxon>Alphaproteobacteria</taxon>
        <taxon>Hyphomicrobiales</taxon>
        <taxon>Rhizobiaceae</taxon>
        <taxon>Rhizobium/Agrobacterium group</taxon>
        <taxon>Rhizobium</taxon>
    </lineage>
</organism>
<comment type="function">
    <text evidence="1">Removes the 2'-phosphate from RNA via an intermediate in which the phosphate is ADP-ribosylated by NAD followed by a presumed transesterification to release the RNA and generate ADP-ribose 1''-2''-cyclic phosphate (APPR&gt;P). May function as an ADP-ribosylase.</text>
</comment>
<comment type="similarity">
    <text evidence="1">Belongs to the KptA/TPT1 family.</text>
</comment>
<dbReference type="EC" id="2.7.1.-" evidence="1"/>
<dbReference type="EMBL" id="CP000628">
    <property type="protein sequence ID" value="ACM26737.1"/>
    <property type="molecule type" value="Genomic_DNA"/>
</dbReference>
<dbReference type="RefSeq" id="WP_012651571.1">
    <property type="nucleotide sequence ID" value="NC_011985.1"/>
</dbReference>
<dbReference type="SMR" id="B9JFP7"/>
<dbReference type="STRING" id="311403.Arad_2576"/>
<dbReference type="KEGG" id="ara:Arad_2576"/>
<dbReference type="eggNOG" id="COG1859">
    <property type="taxonomic scope" value="Bacteria"/>
</dbReference>
<dbReference type="HOGENOM" id="CLU_052998_4_0_5"/>
<dbReference type="Proteomes" id="UP000001600">
    <property type="component" value="Chromosome 1"/>
</dbReference>
<dbReference type="GO" id="GO:0003950">
    <property type="term" value="F:NAD+ poly-ADP-ribosyltransferase activity"/>
    <property type="evidence" value="ECO:0007669"/>
    <property type="project" value="InterPro"/>
</dbReference>
<dbReference type="GO" id="GO:0000215">
    <property type="term" value="F:tRNA 2'-phosphotransferase activity"/>
    <property type="evidence" value="ECO:0007669"/>
    <property type="project" value="TreeGrafter"/>
</dbReference>
<dbReference type="GO" id="GO:0006388">
    <property type="term" value="P:tRNA splicing, via endonucleolytic cleavage and ligation"/>
    <property type="evidence" value="ECO:0007669"/>
    <property type="project" value="UniProtKB-UniRule"/>
</dbReference>
<dbReference type="Gene3D" id="3.20.170.30">
    <property type="match status" value="1"/>
</dbReference>
<dbReference type="Gene3D" id="1.10.10.970">
    <property type="entry name" value="RNA 2'-phosphotransferase, Tpt1/KptA family, N-terminal domain"/>
    <property type="match status" value="1"/>
</dbReference>
<dbReference type="HAMAP" id="MF_00299">
    <property type="entry name" value="KptA"/>
    <property type="match status" value="1"/>
</dbReference>
<dbReference type="InterPro" id="IPR002745">
    <property type="entry name" value="Ptrans_KptA/Tpt1"/>
</dbReference>
<dbReference type="InterPro" id="IPR042081">
    <property type="entry name" value="RNA_2'-PTrans_C"/>
</dbReference>
<dbReference type="InterPro" id="IPR022928">
    <property type="entry name" value="RNA_2'-PTrans_KptA"/>
</dbReference>
<dbReference type="InterPro" id="IPR042080">
    <property type="entry name" value="RNA_2'-PTrans_N"/>
</dbReference>
<dbReference type="NCBIfam" id="NF002013">
    <property type="entry name" value="PRK00819.1-2"/>
    <property type="match status" value="1"/>
</dbReference>
<dbReference type="PANTHER" id="PTHR12684">
    <property type="entry name" value="PUTATIVE PHOSPHOTRANSFERASE"/>
    <property type="match status" value="1"/>
</dbReference>
<dbReference type="PANTHER" id="PTHR12684:SF2">
    <property type="entry name" value="TRNA 2'-PHOSPHOTRANSFERASE 1"/>
    <property type="match status" value="1"/>
</dbReference>
<dbReference type="Pfam" id="PF01885">
    <property type="entry name" value="PTS_2-RNA"/>
    <property type="match status" value="1"/>
</dbReference>
<dbReference type="SUPFAM" id="SSF56399">
    <property type="entry name" value="ADP-ribosylation"/>
    <property type="match status" value="1"/>
</dbReference>